<evidence type="ECO:0000255" key="1">
    <source>
        <dbReference type="HAMAP-Rule" id="MF_00094"/>
    </source>
</evidence>
<gene>
    <name evidence="1" type="primary">prfB</name>
    <name type="ordered locus">NSE_0604</name>
</gene>
<accession>Q2GDG2</accession>
<sequence>MDFETQVVLHNLKKSVEVIRRQLDIEKKHSRLEEIQALVDSPTLWEDQSRAQLLLKEKSQIETSLKEFKELSIQLDDLIEMIELASKDHEEETMKDLERELLLLKEKIQKKEIECLFSGEADGNDCLLEIQSGAGGTESNDWAMMLLRMYTRWAEIYHKFQVQIVDKVEGEETGIKSCTLKVMGKNAYGWARTETGVHRLVRISPFDANAKRHTSFAKIFVSPCIEGEINISIDEKDLKIDTYRASGAGGQHVNKTESAIRITHLPSKIVVQSQSSRSQHQNKAEAMQMLKSRLYEIELRKKEEKLNAARNVEDSIGWGYQIRSYVLHPYQMIKDLRTGHEVGNITSVLDGDLDSFIIATISNNS</sequence>
<organism>
    <name type="scientific">Neorickettsia sennetsu (strain ATCC VR-367 / Miyayama)</name>
    <name type="common">Ehrlichia sennetsu</name>
    <dbReference type="NCBI Taxonomy" id="222891"/>
    <lineage>
        <taxon>Bacteria</taxon>
        <taxon>Pseudomonadati</taxon>
        <taxon>Pseudomonadota</taxon>
        <taxon>Alphaproteobacteria</taxon>
        <taxon>Rickettsiales</taxon>
        <taxon>Anaplasmataceae</taxon>
        <taxon>Neorickettsia</taxon>
    </lineage>
</organism>
<feature type="chain" id="PRO_1000093549" description="Peptide chain release factor 2">
    <location>
        <begin position="1"/>
        <end position="365"/>
    </location>
</feature>
<feature type="modified residue" description="N5-methylglutamine" evidence="1">
    <location>
        <position position="251"/>
    </location>
</feature>
<reference key="1">
    <citation type="journal article" date="2006" name="PLoS Genet.">
        <title>Comparative genomics of emerging human ehrlichiosis agents.</title>
        <authorList>
            <person name="Dunning Hotopp J.C."/>
            <person name="Lin M."/>
            <person name="Madupu R."/>
            <person name="Crabtree J."/>
            <person name="Angiuoli S.V."/>
            <person name="Eisen J.A."/>
            <person name="Seshadri R."/>
            <person name="Ren Q."/>
            <person name="Wu M."/>
            <person name="Utterback T.R."/>
            <person name="Smith S."/>
            <person name="Lewis M."/>
            <person name="Khouri H."/>
            <person name="Zhang C."/>
            <person name="Niu H."/>
            <person name="Lin Q."/>
            <person name="Ohashi N."/>
            <person name="Zhi N."/>
            <person name="Nelson W.C."/>
            <person name="Brinkac L.M."/>
            <person name="Dodson R.J."/>
            <person name="Rosovitz M.J."/>
            <person name="Sundaram J.P."/>
            <person name="Daugherty S.C."/>
            <person name="Davidsen T."/>
            <person name="Durkin A.S."/>
            <person name="Gwinn M.L."/>
            <person name="Haft D.H."/>
            <person name="Selengut J.D."/>
            <person name="Sullivan S.A."/>
            <person name="Zafar N."/>
            <person name="Zhou L."/>
            <person name="Benahmed F."/>
            <person name="Forberger H."/>
            <person name="Halpin R."/>
            <person name="Mulligan S."/>
            <person name="Robinson J."/>
            <person name="White O."/>
            <person name="Rikihisa Y."/>
            <person name="Tettelin H."/>
        </authorList>
    </citation>
    <scope>NUCLEOTIDE SEQUENCE [LARGE SCALE GENOMIC DNA]</scope>
    <source>
        <strain>ATCC VR-367 / Miyayama</strain>
    </source>
</reference>
<keyword id="KW-0963">Cytoplasm</keyword>
<keyword id="KW-0488">Methylation</keyword>
<keyword id="KW-0648">Protein biosynthesis</keyword>
<comment type="function">
    <text evidence="1">Peptide chain release factor 2 directs the termination of translation in response to the peptide chain termination codons UGA and UAA.</text>
</comment>
<comment type="subcellular location">
    <subcellularLocation>
        <location evidence="1">Cytoplasm</location>
    </subcellularLocation>
</comment>
<comment type="PTM">
    <text evidence="1">Methylated by PrmC. Methylation increases the termination efficiency of RF2.</text>
</comment>
<comment type="similarity">
    <text evidence="1">Belongs to the prokaryotic/mitochondrial release factor family.</text>
</comment>
<dbReference type="EMBL" id="CP000237">
    <property type="protein sequence ID" value="ABD45629.1"/>
    <property type="molecule type" value="Genomic_DNA"/>
</dbReference>
<dbReference type="RefSeq" id="WP_011451990.1">
    <property type="nucleotide sequence ID" value="NC_007798.1"/>
</dbReference>
<dbReference type="SMR" id="Q2GDG2"/>
<dbReference type="STRING" id="222891.NSE_0604"/>
<dbReference type="KEGG" id="nse:NSE_0604"/>
<dbReference type="eggNOG" id="COG1186">
    <property type="taxonomic scope" value="Bacteria"/>
</dbReference>
<dbReference type="HOGENOM" id="CLU_3422992_0_0_5"/>
<dbReference type="OrthoDB" id="9806673at2"/>
<dbReference type="Proteomes" id="UP000001942">
    <property type="component" value="Chromosome"/>
</dbReference>
<dbReference type="GO" id="GO:0005737">
    <property type="term" value="C:cytoplasm"/>
    <property type="evidence" value="ECO:0007669"/>
    <property type="project" value="UniProtKB-SubCell"/>
</dbReference>
<dbReference type="GO" id="GO:0016149">
    <property type="term" value="F:translation release factor activity, codon specific"/>
    <property type="evidence" value="ECO:0007669"/>
    <property type="project" value="UniProtKB-UniRule"/>
</dbReference>
<dbReference type="FunFam" id="3.30.160.20:FF:000004">
    <property type="entry name" value="Peptide chain release factor 1"/>
    <property type="match status" value="1"/>
</dbReference>
<dbReference type="Gene3D" id="3.30.160.20">
    <property type="match status" value="1"/>
</dbReference>
<dbReference type="Gene3D" id="3.30.70.1660">
    <property type="match status" value="1"/>
</dbReference>
<dbReference type="Gene3D" id="1.20.58.410">
    <property type="entry name" value="Release factor"/>
    <property type="match status" value="1"/>
</dbReference>
<dbReference type="HAMAP" id="MF_00094">
    <property type="entry name" value="Rel_fac_2"/>
    <property type="match status" value="1"/>
</dbReference>
<dbReference type="InterPro" id="IPR005139">
    <property type="entry name" value="PCRF"/>
</dbReference>
<dbReference type="InterPro" id="IPR000352">
    <property type="entry name" value="Pep_chain_release_fac_I"/>
</dbReference>
<dbReference type="InterPro" id="IPR045853">
    <property type="entry name" value="Pep_chain_release_fac_I_sf"/>
</dbReference>
<dbReference type="InterPro" id="IPR004374">
    <property type="entry name" value="PrfB"/>
</dbReference>
<dbReference type="NCBIfam" id="TIGR00020">
    <property type="entry name" value="prfB"/>
    <property type="match status" value="1"/>
</dbReference>
<dbReference type="PANTHER" id="PTHR43116:SF3">
    <property type="entry name" value="CLASS I PEPTIDE CHAIN RELEASE FACTOR"/>
    <property type="match status" value="1"/>
</dbReference>
<dbReference type="PANTHER" id="PTHR43116">
    <property type="entry name" value="PEPTIDE CHAIN RELEASE FACTOR 2"/>
    <property type="match status" value="1"/>
</dbReference>
<dbReference type="Pfam" id="PF03462">
    <property type="entry name" value="PCRF"/>
    <property type="match status" value="1"/>
</dbReference>
<dbReference type="Pfam" id="PF00472">
    <property type="entry name" value="RF-1"/>
    <property type="match status" value="1"/>
</dbReference>
<dbReference type="SMART" id="SM00937">
    <property type="entry name" value="PCRF"/>
    <property type="match status" value="1"/>
</dbReference>
<dbReference type="SUPFAM" id="SSF75620">
    <property type="entry name" value="Release factor"/>
    <property type="match status" value="1"/>
</dbReference>
<dbReference type="PROSITE" id="PS00745">
    <property type="entry name" value="RF_PROK_I"/>
    <property type="match status" value="1"/>
</dbReference>
<protein>
    <recommendedName>
        <fullName evidence="1">Peptide chain release factor 2</fullName>
        <shortName evidence="1">RF-2</shortName>
    </recommendedName>
</protein>
<proteinExistence type="inferred from homology"/>
<name>RF2_NEOSM</name>